<protein>
    <recommendedName>
        <fullName evidence="1">Cytochrome b6-f complex subunit 5</fullName>
    </recommendedName>
    <alternativeName>
        <fullName evidence="1">Cytochrome b6-f complex subunit PetG</fullName>
    </alternativeName>
    <alternativeName>
        <fullName evidence="1">Cytochrome b6-f complex subunit V</fullName>
    </alternativeName>
</protein>
<accession>P41614</accession>
<keyword id="KW-0150">Chloroplast</keyword>
<keyword id="KW-0249">Electron transport</keyword>
<keyword id="KW-0472">Membrane</keyword>
<keyword id="KW-0602">Photosynthesis</keyword>
<keyword id="KW-0934">Plastid</keyword>
<keyword id="KW-0793">Thylakoid</keyword>
<keyword id="KW-0812">Transmembrane</keyword>
<keyword id="KW-1133">Transmembrane helix</keyword>
<keyword id="KW-0813">Transport</keyword>
<sequence>MIEALPSGIVLGLIPITLAGLFVTAYSQYRRGDQLDI</sequence>
<gene>
    <name evidence="1" type="primary">petG</name>
</gene>
<geneLocation type="chloroplast"/>
<evidence type="ECO:0000255" key="1">
    <source>
        <dbReference type="HAMAP-Rule" id="MF_00432"/>
    </source>
</evidence>
<dbReference type="EMBL" id="D17510">
    <property type="protein sequence ID" value="BAA04347.1"/>
    <property type="molecule type" value="Genomic_DNA"/>
</dbReference>
<dbReference type="PIR" id="T07469">
    <property type="entry name" value="T07469"/>
</dbReference>
<dbReference type="RefSeq" id="NP_042390.1">
    <property type="nucleotide sequence ID" value="NC_001631.1"/>
</dbReference>
<dbReference type="SMR" id="P41614"/>
<dbReference type="GeneID" id="809008"/>
<dbReference type="GO" id="GO:0009535">
    <property type="term" value="C:chloroplast thylakoid membrane"/>
    <property type="evidence" value="ECO:0007669"/>
    <property type="project" value="UniProtKB-SubCell"/>
</dbReference>
<dbReference type="GO" id="GO:0009512">
    <property type="term" value="C:cytochrome b6f complex"/>
    <property type="evidence" value="ECO:0007669"/>
    <property type="project" value="InterPro"/>
</dbReference>
<dbReference type="GO" id="GO:0045158">
    <property type="term" value="F:electron transporter, transferring electrons within cytochrome b6/f complex of photosystem II activity"/>
    <property type="evidence" value="ECO:0007669"/>
    <property type="project" value="UniProtKB-UniRule"/>
</dbReference>
<dbReference type="GO" id="GO:0017004">
    <property type="term" value="P:cytochrome complex assembly"/>
    <property type="evidence" value="ECO:0007669"/>
    <property type="project" value="UniProtKB-UniRule"/>
</dbReference>
<dbReference type="GO" id="GO:0015979">
    <property type="term" value="P:photosynthesis"/>
    <property type="evidence" value="ECO:0007669"/>
    <property type="project" value="UniProtKB-KW"/>
</dbReference>
<dbReference type="HAMAP" id="MF_00432">
    <property type="entry name" value="Cytb6_f_PetG"/>
    <property type="match status" value="1"/>
</dbReference>
<dbReference type="InterPro" id="IPR003683">
    <property type="entry name" value="Cyt_6/f_cplx_su5"/>
</dbReference>
<dbReference type="InterPro" id="IPR036099">
    <property type="entry name" value="Cyt_6/f_cplx_su5_sf"/>
</dbReference>
<dbReference type="NCBIfam" id="NF001907">
    <property type="entry name" value="PRK00665.1"/>
    <property type="match status" value="1"/>
</dbReference>
<dbReference type="Pfam" id="PF02529">
    <property type="entry name" value="PetG"/>
    <property type="match status" value="1"/>
</dbReference>
<dbReference type="PIRSF" id="PIRSF000034">
    <property type="entry name" value="Cyt_b6-f_V"/>
    <property type="match status" value="1"/>
</dbReference>
<dbReference type="SUPFAM" id="SSF103446">
    <property type="entry name" value="PetG subunit of the cytochrome b6f complex"/>
    <property type="match status" value="1"/>
</dbReference>
<reference key="1">
    <citation type="journal article" date="1994" name="Proc. Natl. Acad. Sci. U.S.A.">
        <title>Loss of all ndh genes as determined by sequencing the entire chloroplast genome of the black pine Pinus thunbergii.</title>
        <authorList>
            <person name="Wakasugi T."/>
            <person name="Tsudzuki J."/>
            <person name="Ito S."/>
            <person name="Nakashima K."/>
            <person name="Tsudzuki T."/>
            <person name="Sugiura M."/>
        </authorList>
    </citation>
    <scope>NUCLEOTIDE SEQUENCE [LARGE SCALE GENOMIC DNA]</scope>
</reference>
<organism>
    <name type="scientific">Pinus thunbergii</name>
    <name type="common">Japanese black pine</name>
    <name type="synonym">Pinus thunbergiana</name>
    <dbReference type="NCBI Taxonomy" id="3350"/>
    <lineage>
        <taxon>Eukaryota</taxon>
        <taxon>Viridiplantae</taxon>
        <taxon>Streptophyta</taxon>
        <taxon>Embryophyta</taxon>
        <taxon>Tracheophyta</taxon>
        <taxon>Spermatophyta</taxon>
        <taxon>Pinopsida</taxon>
        <taxon>Pinidae</taxon>
        <taxon>Conifers I</taxon>
        <taxon>Pinales</taxon>
        <taxon>Pinaceae</taxon>
        <taxon>Pinus</taxon>
        <taxon>Pinus subgen. Pinus</taxon>
    </lineage>
</organism>
<comment type="function">
    <text evidence="1">Component of the cytochrome b6-f complex, which mediates electron transfer between photosystem II (PSII) and photosystem I (PSI), cyclic electron flow around PSI, and state transitions. PetG is required for either the stability or assembly of the cytochrome b6-f complex.</text>
</comment>
<comment type="subunit">
    <text evidence="1">The 4 large subunits of the cytochrome b6-f complex are cytochrome b6, subunit IV (17 kDa polypeptide, PetD), cytochrome f and the Rieske protein, while the 4 small subunits are PetG, PetL, PetM and PetN. The complex functions as a dimer.</text>
</comment>
<comment type="subcellular location">
    <subcellularLocation>
        <location evidence="1">Plastid</location>
        <location evidence="1">Chloroplast thylakoid membrane</location>
        <topology evidence="1">Single-pass membrane protein</topology>
    </subcellularLocation>
</comment>
<comment type="similarity">
    <text evidence="1">Belongs to the PetG family.</text>
</comment>
<name>PETG_PINTH</name>
<feature type="chain" id="PRO_0000216398" description="Cytochrome b6-f complex subunit 5">
    <location>
        <begin position="1"/>
        <end position="37"/>
    </location>
</feature>
<feature type="transmembrane region" description="Helical" evidence="1">
    <location>
        <begin position="5"/>
        <end position="25"/>
    </location>
</feature>
<proteinExistence type="inferred from homology"/>